<protein>
    <recommendedName>
        <fullName>Uncharacterized 11.6 kDa protein in mobS 3'region</fullName>
    </recommendedName>
    <alternativeName>
        <fullName>ORF 7</fullName>
    </alternativeName>
</protein>
<proteinExistence type="predicted"/>
<name>YMS1_ACIFI</name>
<keyword id="KW-0614">Plasmid</keyword>
<accession>P20090</accession>
<organism>
    <name type="scientific">Acidithiobacillus ferridurans</name>
    <dbReference type="NCBI Taxonomy" id="1232575"/>
    <lineage>
        <taxon>Bacteria</taxon>
        <taxon>Pseudomonadati</taxon>
        <taxon>Pseudomonadota</taxon>
        <taxon>Acidithiobacillia</taxon>
        <taxon>Acidithiobacillales</taxon>
        <taxon>Acidithiobacillaceae</taxon>
        <taxon>Acidithiobacillus</taxon>
    </lineage>
</organism>
<geneLocation type="plasmid">
    <name>pTF1</name>
</geneLocation>
<reference key="1">
    <citation type="journal article" date="1990" name="Mol. Microbiol.">
        <title>The mobilization and origin of transfer regions of a Thiobacillus ferrooxidans plasmid: relatedness to plasmids RSF1010 and pSC101.</title>
        <authorList>
            <person name="Drolet M."/>
            <person name="Zanga P."/>
            <person name="Lau P.C.K."/>
        </authorList>
    </citation>
    <scope>NUCLEOTIDE SEQUENCE [GENOMIC DNA]</scope>
    <source>
        <strain>ATCC 33020 / DSM 29468 / JCM 18981 / 11Fe</strain>
    </source>
</reference>
<dbReference type="EMBL" id="X52699">
    <property type="protein sequence ID" value="CAA36925.1"/>
    <property type="molecule type" value="Genomic_DNA"/>
</dbReference>
<dbReference type="PIR" id="S12188">
    <property type="entry name" value="S12188"/>
</dbReference>
<dbReference type="RefSeq" id="WP_215886099.1">
    <property type="nucleotide sequence ID" value="NZ_JABBHQ010000049.1"/>
</dbReference>
<feature type="chain" id="PRO_0000068507" description="Uncharacterized 11.6 kDa protein in mobS 3'region">
    <location>
        <begin position="1"/>
        <end position="104"/>
    </location>
</feature>
<sequence>MENVQEVREQLLSVLAGLDVLVGSTINTKFSSKEVQTIVLNELSAKLRKEIMGLVMLMLQTDEEAAEFADGLDLGISLEKKRQHWHDIGQSIYISHERSLGIEI</sequence>